<protein>
    <recommendedName>
        <fullName evidence="1">Regulatory protein E2</fullName>
    </recommendedName>
</protein>
<organismHost>
    <name type="scientific">Homo sapiens</name>
    <name type="common">Human</name>
    <dbReference type="NCBI Taxonomy" id="9606"/>
</organismHost>
<proteinExistence type="inferred from homology"/>
<evidence type="ECO:0000255" key="1">
    <source>
        <dbReference type="HAMAP-Rule" id="MF_04001"/>
    </source>
</evidence>
<evidence type="ECO:0000256" key="2">
    <source>
        <dbReference type="SAM" id="MobiDB-lite"/>
    </source>
</evidence>
<name>VE2_HPV33</name>
<dbReference type="EMBL" id="M12732">
    <property type="protein sequence ID" value="AAA46961.1"/>
    <property type="molecule type" value="Genomic_DNA"/>
</dbReference>
<dbReference type="PIR" id="A03670">
    <property type="entry name" value="W2WL33"/>
</dbReference>
<dbReference type="SMR" id="P06423"/>
<dbReference type="IntAct" id="P06423">
    <property type="interactions" value="64"/>
</dbReference>
<dbReference type="MINT" id="P06423"/>
<dbReference type="Proteomes" id="UP000009118">
    <property type="component" value="Genome"/>
</dbReference>
<dbReference type="GO" id="GO:0042025">
    <property type="term" value="C:host cell nucleus"/>
    <property type="evidence" value="ECO:0007669"/>
    <property type="project" value="UniProtKB-SubCell"/>
</dbReference>
<dbReference type="GO" id="GO:0003677">
    <property type="term" value="F:DNA binding"/>
    <property type="evidence" value="ECO:0007669"/>
    <property type="project" value="UniProtKB-UniRule"/>
</dbReference>
<dbReference type="GO" id="GO:0003700">
    <property type="term" value="F:DNA-binding transcription factor activity"/>
    <property type="evidence" value="ECO:0007669"/>
    <property type="project" value="UniProtKB-UniRule"/>
</dbReference>
<dbReference type="GO" id="GO:0000166">
    <property type="term" value="F:nucleotide binding"/>
    <property type="evidence" value="ECO:0007669"/>
    <property type="project" value="UniProtKB-UniRule"/>
</dbReference>
<dbReference type="GO" id="GO:0006260">
    <property type="term" value="P:DNA replication"/>
    <property type="evidence" value="ECO:0007669"/>
    <property type="project" value="UniProtKB-KW"/>
</dbReference>
<dbReference type="GO" id="GO:0006351">
    <property type="term" value="P:DNA-templated transcription"/>
    <property type="evidence" value="ECO:0007669"/>
    <property type="project" value="UniProtKB-UniRule"/>
</dbReference>
<dbReference type="GO" id="GO:0006275">
    <property type="term" value="P:regulation of DNA replication"/>
    <property type="evidence" value="ECO:0007669"/>
    <property type="project" value="UniProtKB-UniRule"/>
</dbReference>
<dbReference type="GO" id="GO:0039693">
    <property type="term" value="P:viral DNA genome replication"/>
    <property type="evidence" value="ECO:0007669"/>
    <property type="project" value="UniProtKB-UniRule"/>
</dbReference>
<dbReference type="Gene3D" id="3.30.70.330">
    <property type="match status" value="1"/>
</dbReference>
<dbReference type="Gene3D" id="1.10.287.30">
    <property type="entry name" value="E2 (early) protein, N terminal domain, subdomain 1"/>
    <property type="match status" value="1"/>
</dbReference>
<dbReference type="Gene3D" id="2.170.200.10">
    <property type="entry name" value="Papillomavirus E2 early protein domain"/>
    <property type="match status" value="1"/>
</dbReference>
<dbReference type="HAMAP" id="MF_04001">
    <property type="entry name" value="PPV_E2"/>
    <property type="match status" value="1"/>
</dbReference>
<dbReference type="InterPro" id="IPR035975">
    <property type="entry name" value="E2/EBNA1_C_sf"/>
</dbReference>
<dbReference type="InterPro" id="IPR012677">
    <property type="entry name" value="Nucleotide-bd_a/b_plait_sf"/>
</dbReference>
<dbReference type="InterPro" id="IPR000427">
    <property type="entry name" value="Papillomavirus_E2_C"/>
</dbReference>
<dbReference type="InterPro" id="IPR001866">
    <property type="entry name" value="PPV_E2_N"/>
</dbReference>
<dbReference type="InterPro" id="IPR033668">
    <property type="entry name" value="Reg_prot_E2"/>
</dbReference>
<dbReference type="InterPro" id="IPR036050">
    <property type="entry name" value="Regulatory_protein_E2_N"/>
</dbReference>
<dbReference type="InterPro" id="IPR042503">
    <property type="entry name" value="Regulatory_protein_E2_N_1"/>
</dbReference>
<dbReference type="InterPro" id="IPR042504">
    <property type="entry name" value="Regulatory_protein_E2_N_2"/>
</dbReference>
<dbReference type="Pfam" id="PF00511">
    <property type="entry name" value="PPV_E2_C"/>
    <property type="match status" value="1"/>
</dbReference>
<dbReference type="Pfam" id="PF00508">
    <property type="entry name" value="PPV_E2_N"/>
    <property type="match status" value="1"/>
</dbReference>
<dbReference type="SUPFAM" id="SSF51332">
    <property type="entry name" value="E2 regulatory, transactivation domain"/>
    <property type="match status" value="1"/>
</dbReference>
<dbReference type="SUPFAM" id="SSF54957">
    <property type="entry name" value="Viral DNA-binding domain"/>
    <property type="match status" value="1"/>
</dbReference>
<organism>
    <name type="scientific">Human papillomavirus 33</name>
    <dbReference type="NCBI Taxonomy" id="10586"/>
    <lineage>
        <taxon>Viruses</taxon>
        <taxon>Monodnaviria</taxon>
        <taxon>Shotokuvirae</taxon>
        <taxon>Cossaviricota</taxon>
        <taxon>Papovaviricetes</taxon>
        <taxon>Zurhausenvirales</taxon>
        <taxon>Papillomaviridae</taxon>
        <taxon>Firstpapillomavirinae</taxon>
        <taxon>Alphapapillomavirus</taxon>
        <taxon>Alphapapillomavirus 9</taxon>
    </lineage>
</organism>
<gene>
    <name evidence="1" type="primary">E2</name>
</gene>
<accession>P06423</accession>
<comment type="function">
    <text evidence="1">Plays a role in the initiation of viral DNA replication. A dimer of E2 interacts with a dimer of E1 in order to improve specificity of E1 DNA binding activity. Once the complex recognizes and binds DNA at specific sites, the E2 dimer is removed from DNA. E2 also regulates viral transcription through binding to the E2RE response element (5'-ACCNNNNNNGGT-3') present in multiple copies in the regulatory regions of the viral genome. Activates or represses transcription depending on E2RE's position with regards to proximal promoter elements including the TATA-box. Repression occurs by sterically hindering the assembly of the transcription initiation complex.</text>
</comment>
<comment type="subunit">
    <text evidence="1">Binds DNA as homodimer. Interacts with protein E1; this interaction greatly increases E1 DNA-binding activity. Interacts with protein L1; this interaction enhances E2-dependent replication and transcription activation. Interacts with protein L2; this interaction inhibits E2 transcriptional activity but not DNA replication function E2. Interacts with protein E7; this interaction inhibits E7 oncogenic activity. Interacts with host TAF1; this interaction modulates E2-dependent transcriptional regulation. Interacts with host BRD4; this interaction mediates E2 transcriptional activation function. Additionally, the interaction with host BRD4 on mitotic chromosomes mediates tethering of the viral genome. Interacts with host TOPBP1; this interaction is required for optimal viral DNA replication.</text>
</comment>
<comment type="subcellular location">
    <subcellularLocation>
        <location evidence="1">Host nucleus</location>
    </subcellularLocation>
</comment>
<comment type="PTM">
    <text evidence="1">Phosphorylated.</text>
</comment>
<comment type="PTM">
    <text evidence="1">Sumoylation plays a regulatory role in E2 transcriptional activity.</text>
</comment>
<comment type="similarity">
    <text evidence="1">Belongs to the papillomaviridae E2 protein family.</text>
</comment>
<reference key="1">
    <citation type="journal article" date="1986" name="J. Virol.">
        <title>Genome organization and nucleotide sequence of human papillomavirus type 33, which is associated with cervical cancer.</title>
        <authorList>
            <person name="Cole S.T."/>
            <person name="Streeck R.E."/>
        </authorList>
    </citation>
    <scope>NUCLEOTIDE SEQUENCE [GENOMIC DNA]</scope>
</reference>
<feature type="chain" id="PRO_0000133213" description="Regulatory protein E2">
    <location>
        <begin position="1"/>
        <end position="353"/>
    </location>
</feature>
<feature type="region of interest" description="Transactivation domain" evidence="1">
    <location>
        <begin position="1"/>
        <end position="200"/>
    </location>
</feature>
<feature type="region of interest" description="Disordered" evidence="2">
    <location>
        <begin position="206"/>
        <end position="234"/>
    </location>
</feature>
<feature type="region of interest" description="DNA-binding domain" evidence="1">
    <location>
        <begin position="273"/>
        <end position="353"/>
    </location>
</feature>
<feature type="compositionally biased region" description="Polar residues" evidence="2">
    <location>
        <begin position="206"/>
        <end position="215"/>
    </location>
</feature>
<feature type="cross-link" description="Glycyl lysine isopeptide (Lys-Gly) (interchain with G-Cter in SUMO)" evidence="1">
    <location>
        <position position="280"/>
    </location>
</feature>
<sequence length="353" mass="40253">MEEISARLNAVQEKILDLYEADKTDLPSQIEHWKLIRMECALLYTAKQMGFSHLCHQVVPSLLASKTKAFQVIELQMALETLSKSQYSTSQWTLQQTSLEVWLCEPPKCFKKQGETVTVQYDNDKKNTMDYTNWGEIYIIEEDTCTMVTGKVDYIGMYYIHNCEKVYFKYFKEDAAKYSKTQMWEVHVGGQVIVCPTSISSNQISTTETADIQTDNDNRPPQAAAKRRRPADTTDTAQPLTKLFCADPALDNRTARTATNCTNKQRTVCSSNVAPIVHLKGESNSLKCLRYRLKPYKELYSSMSSTWHWTSDNKNSKNGIVTVTFVTEQQQQMFLGTVKIPPTVQISTGFMTL</sequence>
<keyword id="KW-0010">Activator</keyword>
<keyword id="KW-0235">DNA replication</keyword>
<keyword id="KW-0238">DNA-binding</keyword>
<keyword id="KW-0244">Early protein</keyword>
<keyword id="KW-1048">Host nucleus</keyword>
<keyword id="KW-1017">Isopeptide bond</keyword>
<keyword id="KW-0597">Phosphoprotein</keyword>
<keyword id="KW-0678">Repressor</keyword>
<keyword id="KW-0804">Transcription</keyword>
<keyword id="KW-0805">Transcription regulation</keyword>
<keyword id="KW-0832">Ubl conjugation</keyword>